<reference key="1">
    <citation type="journal article" date="2011" name="MBio">
        <title>Novel metabolic attributes of the genus Cyanothece, comprising a group of unicellular nitrogen-fixing Cyanobacteria.</title>
        <authorList>
            <person name="Bandyopadhyay A."/>
            <person name="Elvitigala T."/>
            <person name="Welsh E."/>
            <person name="Stockel J."/>
            <person name="Liberton M."/>
            <person name="Min H."/>
            <person name="Sherman L.A."/>
            <person name="Pakrasi H.B."/>
        </authorList>
    </citation>
    <scope>NUCLEOTIDE SEQUENCE [LARGE SCALE GENOMIC DNA]</scope>
    <source>
        <strain>PCC 8801 / RF-1</strain>
    </source>
</reference>
<keyword id="KW-1185">Reference proteome</keyword>
<keyword id="KW-0687">Ribonucleoprotein</keyword>
<keyword id="KW-0689">Ribosomal protein</keyword>
<name>RL7_RIPO1</name>
<comment type="function">
    <text evidence="1">Forms part of the ribosomal stalk which helps the ribosome interact with GTP-bound translation factors. Is thus essential for accurate translation.</text>
</comment>
<comment type="subunit">
    <text evidence="1">Homodimer. Part of the ribosomal stalk of the 50S ribosomal subunit. Forms a multimeric L10(L12)X complex, where L10 forms an elongated spine to which 2 to 4 L12 dimers bind in a sequential fashion. Binds GTP-bound translation factors.</text>
</comment>
<comment type="similarity">
    <text evidence="1">Belongs to the bacterial ribosomal protein bL12 family.</text>
</comment>
<dbReference type="EMBL" id="CP001287">
    <property type="protein sequence ID" value="ACK65784.1"/>
    <property type="molecule type" value="Genomic_DNA"/>
</dbReference>
<dbReference type="RefSeq" id="WP_012595057.1">
    <property type="nucleotide sequence ID" value="NC_011726.1"/>
</dbReference>
<dbReference type="SMR" id="B7JWT5"/>
<dbReference type="STRING" id="41431.PCC8801_1737"/>
<dbReference type="KEGG" id="cyp:PCC8801_1737"/>
<dbReference type="eggNOG" id="COG0222">
    <property type="taxonomic scope" value="Bacteria"/>
</dbReference>
<dbReference type="HOGENOM" id="CLU_086499_3_0_3"/>
<dbReference type="OrthoDB" id="9811748at2"/>
<dbReference type="Proteomes" id="UP000008204">
    <property type="component" value="Chromosome"/>
</dbReference>
<dbReference type="GO" id="GO:0022625">
    <property type="term" value="C:cytosolic large ribosomal subunit"/>
    <property type="evidence" value="ECO:0007669"/>
    <property type="project" value="TreeGrafter"/>
</dbReference>
<dbReference type="GO" id="GO:0003729">
    <property type="term" value="F:mRNA binding"/>
    <property type="evidence" value="ECO:0007669"/>
    <property type="project" value="TreeGrafter"/>
</dbReference>
<dbReference type="GO" id="GO:0003735">
    <property type="term" value="F:structural constituent of ribosome"/>
    <property type="evidence" value="ECO:0007669"/>
    <property type="project" value="InterPro"/>
</dbReference>
<dbReference type="GO" id="GO:0006412">
    <property type="term" value="P:translation"/>
    <property type="evidence" value="ECO:0007669"/>
    <property type="project" value="UniProtKB-UniRule"/>
</dbReference>
<dbReference type="CDD" id="cd00387">
    <property type="entry name" value="Ribosomal_L7_L12"/>
    <property type="match status" value="1"/>
</dbReference>
<dbReference type="FunFam" id="3.30.1390.10:FF:000001">
    <property type="entry name" value="50S ribosomal protein L7/L12"/>
    <property type="match status" value="1"/>
</dbReference>
<dbReference type="Gene3D" id="3.30.1390.10">
    <property type="match status" value="1"/>
</dbReference>
<dbReference type="Gene3D" id="1.20.5.710">
    <property type="entry name" value="Single helix bin"/>
    <property type="match status" value="1"/>
</dbReference>
<dbReference type="HAMAP" id="MF_00368">
    <property type="entry name" value="Ribosomal_bL12"/>
    <property type="match status" value="1"/>
</dbReference>
<dbReference type="InterPro" id="IPR000206">
    <property type="entry name" value="Ribosomal_bL12"/>
</dbReference>
<dbReference type="InterPro" id="IPR013823">
    <property type="entry name" value="Ribosomal_bL12_C"/>
</dbReference>
<dbReference type="InterPro" id="IPR014719">
    <property type="entry name" value="Ribosomal_bL12_C/ClpS-like"/>
</dbReference>
<dbReference type="InterPro" id="IPR008932">
    <property type="entry name" value="Ribosomal_bL12_oligo"/>
</dbReference>
<dbReference type="InterPro" id="IPR036235">
    <property type="entry name" value="Ribosomal_bL12_oligo_N_sf"/>
</dbReference>
<dbReference type="NCBIfam" id="TIGR00855">
    <property type="entry name" value="L12"/>
    <property type="match status" value="1"/>
</dbReference>
<dbReference type="PANTHER" id="PTHR45987">
    <property type="entry name" value="39S RIBOSOMAL PROTEIN L12"/>
    <property type="match status" value="1"/>
</dbReference>
<dbReference type="PANTHER" id="PTHR45987:SF4">
    <property type="entry name" value="LARGE RIBOSOMAL SUBUNIT PROTEIN BL12M"/>
    <property type="match status" value="1"/>
</dbReference>
<dbReference type="Pfam" id="PF00542">
    <property type="entry name" value="Ribosomal_L12"/>
    <property type="match status" value="1"/>
</dbReference>
<dbReference type="Pfam" id="PF16320">
    <property type="entry name" value="Ribosomal_L12_N"/>
    <property type="match status" value="1"/>
</dbReference>
<dbReference type="SUPFAM" id="SSF54736">
    <property type="entry name" value="ClpS-like"/>
    <property type="match status" value="1"/>
</dbReference>
<dbReference type="SUPFAM" id="SSF48300">
    <property type="entry name" value="Ribosomal protein L7/12, oligomerisation (N-terminal) domain"/>
    <property type="match status" value="1"/>
</dbReference>
<evidence type="ECO:0000255" key="1">
    <source>
        <dbReference type="HAMAP-Rule" id="MF_00368"/>
    </source>
</evidence>
<evidence type="ECO:0000256" key="2">
    <source>
        <dbReference type="SAM" id="MobiDB-lite"/>
    </source>
</evidence>
<evidence type="ECO:0000305" key="3"/>
<proteinExistence type="inferred from homology"/>
<accession>B7JWT5</accession>
<gene>
    <name evidence="1" type="primary">rplL</name>
    <name evidence="1" type="synonym">rpl12</name>
    <name type="ordered locus">PCC8801_1737</name>
</gene>
<organism>
    <name type="scientific">Rippkaea orientalis (strain PCC 8801 / RF-1)</name>
    <name type="common">Cyanothece sp. (strain PCC 8801)</name>
    <dbReference type="NCBI Taxonomy" id="41431"/>
    <lineage>
        <taxon>Bacteria</taxon>
        <taxon>Bacillati</taxon>
        <taxon>Cyanobacteriota</taxon>
        <taxon>Cyanophyceae</taxon>
        <taxon>Oscillatoriophycideae</taxon>
        <taxon>Chroococcales</taxon>
        <taxon>Aphanothecaceae</taxon>
        <taxon>Rippkaea</taxon>
        <taxon>Rippkaea orientalis</taxon>
    </lineage>
</organism>
<protein>
    <recommendedName>
        <fullName evidence="1">Large ribosomal subunit protein bL12</fullName>
    </recommendedName>
    <alternativeName>
        <fullName evidence="3">50S ribosomal protein L7/L12</fullName>
    </alternativeName>
</protein>
<sequence>MSAATDQILEQLKSLTLLEASELVKQIEEAFGVSAAAPVGGGMMMMAPGGAAPAAAEPEEEKTEFDVVLEDVPADKKIAILKVVRAITGLGLKEAKDLVESAPKPIKEATNKDDAESIKKQLEEAGAKASVK</sequence>
<feature type="chain" id="PRO_1000121422" description="Large ribosomal subunit protein bL12">
    <location>
        <begin position="1"/>
        <end position="132"/>
    </location>
</feature>
<feature type="region of interest" description="Disordered" evidence="2">
    <location>
        <begin position="102"/>
        <end position="132"/>
    </location>
</feature>
<feature type="compositionally biased region" description="Basic and acidic residues" evidence="2">
    <location>
        <begin position="102"/>
        <end position="126"/>
    </location>
</feature>